<proteinExistence type="inferred from homology"/>
<feature type="chain" id="PRO_0000379033" description="Protein crossbronx">
    <location>
        <begin position="1"/>
        <end position="245"/>
    </location>
</feature>
<feature type="domain" description="UBC core" evidence="1">
    <location>
        <begin position="20"/>
        <end position="177"/>
    </location>
</feature>
<name>AKTP1_DROMO</name>
<gene>
    <name type="primary">cbx</name>
    <name type="ORF">GI20739</name>
</gene>
<comment type="similarity">
    <text evidence="1">Belongs to the ubiquitin-conjugating enzyme family. FTS subfamily.</text>
</comment>
<comment type="caution">
    <text evidence="2">Lacks the conserved Cys residue necessary for ubiquitin-conjugating enzyme E2 activity.</text>
</comment>
<dbReference type="EMBL" id="CH933808">
    <property type="protein sequence ID" value="EDW09846.1"/>
    <property type="molecule type" value="Genomic_DNA"/>
</dbReference>
<dbReference type="SMR" id="B4KMF8"/>
<dbReference type="FunCoup" id="B4KMF8">
    <property type="interactions" value="1025"/>
</dbReference>
<dbReference type="EnsemblMetazoa" id="FBtr0171464">
    <property type="protein sequence ID" value="FBpp0169956"/>
    <property type="gene ID" value="FBgn0143474"/>
</dbReference>
<dbReference type="EnsemblMetazoa" id="XM_002005875.4">
    <property type="protein sequence ID" value="XP_002005911.1"/>
    <property type="gene ID" value="LOC6580039"/>
</dbReference>
<dbReference type="GeneID" id="6580039"/>
<dbReference type="KEGG" id="dmo:Dmoj_GI20739"/>
<dbReference type="CTD" id="47272"/>
<dbReference type="eggNOG" id="KOG0429">
    <property type="taxonomic scope" value="Eukaryota"/>
</dbReference>
<dbReference type="HOGENOM" id="CLU_083049_1_0_1"/>
<dbReference type="InParanoid" id="B4KMF8"/>
<dbReference type="OMA" id="WGFPEWR"/>
<dbReference type="OrthoDB" id="5596422at2759"/>
<dbReference type="PhylomeDB" id="B4KMF8"/>
<dbReference type="ChiTaRS" id="Ubx">
    <property type="organism name" value="fly"/>
</dbReference>
<dbReference type="Proteomes" id="UP000009192">
    <property type="component" value="Unassembled WGS sequence"/>
</dbReference>
<dbReference type="CDD" id="cd23814">
    <property type="entry name" value="UEV_AKTIP"/>
    <property type="match status" value="1"/>
</dbReference>
<dbReference type="FunFam" id="3.10.110.10:FF:000121">
    <property type="entry name" value="Protein crossbronx"/>
    <property type="match status" value="1"/>
</dbReference>
<dbReference type="Gene3D" id="3.10.110.10">
    <property type="entry name" value="Ubiquitin Conjugating Enzyme"/>
    <property type="match status" value="1"/>
</dbReference>
<dbReference type="InterPro" id="IPR000608">
    <property type="entry name" value="UBQ-conjugat_E2_core"/>
</dbReference>
<dbReference type="InterPro" id="IPR016135">
    <property type="entry name" value="UBQ-conjugating_enzyme/RWD"/>
</dbReference>
<dbReference type="Pfam" id="PF00179">
    <property type="entry name" value="UQ_con"/>
    <property type="match status" value="1"/>
</dbReference>
<dbReference type="SMART" id="SM00212">
    <property type="entry name" value="UBCc"/>
    <property type="match status" value="1"/>
</dbReference>
<dbReference type="SUPFAM" id="SSF54495">
    <property type="entry name" value="UBC-like"/>
    <property type="match status" value="1"/>
</dbReference>
<dbReference type="PROSITE" id="PS50127">
    <property type="entry name" value="UBC_2"/>
    <property type="match status" value="1"/>
</dbReference>
<reference key="1">
    <citation type="journal article" date="2007" name="Nature">
        <title>Evolution of genes and genomes on the Drosophila phylogeny.</title>
        <authorList>
            <consortium name="Drosophila 12 genomes consortium"/>
        </authorList>
    </citation>
    <scope>NUCLEOTIDE SEQUENCE [LARGE SCALE GENOMIC DNA]</scope>
    <source>
        <strain>Tucson 15081-1352.22</strain>
    </source>
</reference>
<protein>
    <recommendedName>
        <fullName>Protein crossbronx</fullName>
    </recommendedName>
</protein>
<organism>
    <name type="scientific">Drosophila mojavensis</name>
    <name type="common">Fruit fly</name>
    <dbReference type="NCBI Taxonomy" id="7230"/>
    <lineage>
        <taxon>Eukaryota</taxon>
        <taxon>Metazoa</taxon>
        <taxon>Ecdysozoa</taxon>
        <taxon>Arthropoda</taxon>
        <taxon>Hexapoda</taxon>
        <taxon>Insecta</taxon>
        <taxon>Pterygota</taxon>
        <taxon>Neoptera</taxon>
        <taxon>Endopterygota</taxon>
        <taxon>Diptera</taxon>
        <taxon>Brachycera</taxon>
        <taxon>Muscomorpha</taxon>
        <taxon>Ephydroidea</taxon>
        <taxon>Drosophilidae</taxon>
        <taxon>Drosophila</taxon>
    </lineage>
</organism>
<evidence type="ECO:0000255" key="1">
    <source>
        <dbReference type="PROSITE-ProRule" id="PRU00388"/>
    </source>
</evidence>
<evidence type="ECO:0000305" key="2"/>
<accession>B4KMF8</accession>
<sequence length="245" mass="27590">MTLDVDAQKKDEKLLLATIHQEYKILAEYKMIESEKVSGIYVIPSYANSLQWFGVFFGRQGFYENSVFRFSILLPDGFPQDKTTPAIVFQQNVVHPLVCPFTNSLDISHAFPEWRCGEDHLWQVLKYMQVIFADPLECIRSVGSTQELSNVEASKLLTTNRDAFAALVQESIAESKAHIYDTPPTEDPHYIVFEKFQEDIHGPVLEQIRNGRTTNSPAESGGGGAATGLSWVKVKEGEFKPLSIE</sequence>
<keyword id="KW-1185">Reference proteome</keyword>